<reference key="1">
    <citation type="journal article" date="2004" name="Science">
        <title>A predator unmasked: life cycle of Bdellovibrio bacteriovorus from a genomic perspective.</title>
        <authorList>
            <person name="Rendulic S."/>
            <person name="Jagtap P."/>
            <person name="Rosinus A."/>
            <person name="Eppinger M."/>
            <person name="Baar C."/>
            <person name="Lanz C."/>
            <person name="Keller H."/>
            <person name="Lambert C."/>
            <person name="Evans K.J."/>
            <person name="Goesmann A."/>
            <person name="Meyer F."/>
            <person name="Sockett R.E."/>
            <person name="Schuster S.C."/>
        </authorList>
    </citation>
    <scope>NUCLEOTIDE SEQUENCE [LARGE SCALE GENOMIC DNA]</scope>
    <source>
        <strain>ATCC 15356 / DSM 50701 / NCIMB 9529 / HD100</strain>
    </source>
</reference>
<keyword id="KW-1185">Reference proteome</keyword>
<keyword id="KW-0687">Ribonucleoprotein</keyword>
<keyword id="KW-0689">Ribosomal protein</keyword>
<keyword id="KW-0694">RNA-binding</keyword>
<keyword id="KW-0699">rRNA-binding</keyword>
<protein>
    <recommendedName>
        <fullName evidence="1">Small ribosomal subunit protein bS6</fullName>
    </recommendedName>
    <alternativeName>
        <fullName evidence="2">30S ribosomal protein S6</fullName>
    </alternativeName>
</protein>
<organism>
    <name type="scientific">Bdellovibrio bacteriovorus (strain ATCC 15356 / DSM 50701 / NCIMB 9529 / HD100)</name>
    <dbReference type="NCBI Taxonomy" id="264462"/>
    <lineage>
        <taxon>Bacteria</taxon>
        <taxon>Pseudomonadati</taxon>
        <taxon>Bdellovibrionota</taxon>
        <taxon>Bdellovibrionia</taxon>
        <taxon>Bdellovibrionales</taxon>
        <taxon>Pseudobdellovibrionaceae</taxon>
        <taxon>Bdellovibrio</taxon>
    </lineage>
</organism>
<feature type="chain" id="PRO_0000176730" description="Small ribosomal subunit protein bS6">
    <location>
        <begin position="1"/>
        <end position="152"/>
    </location>
</feature>
<name>RS6_BDEBA</name>
<proteinExistence type="inferred from homology"/>
<evidence type="ECO:0000255" key="1">
    <source>
        <dbReference type="HAMAP-Rule" id="MF_00360"/>
    </source>
</evidence>
<evidence type="ECO:0000305" key="2"/>
<dbReference type="EMBL" id="BX842646">
    <property type="protein sequence ID" value="CAE77714.1"/>
    <property type="molecule type" value="Genomic_DNA"/>
</dbReference>
<dbReference type="RefSeq" id="WP_011162655.1">
    <property type="nucleotide sequence ID" value="NC_005363.1"/>
</dbReference>
<dbReference type="SMR" id="Q6MRP3"/>
<dbReference type="STRING" id="264462.Bd0032"/>
<dbReference type="GeneID" id="93011185"/>
<dbReference type="KEGG" id="bba:Bd0032"/>
<dbReference type="eggNOG" id="COG0360">
    <property type="taxonomic scope" value="Bacteria"/>
</dbReference>
<dbReference type="HOGENOM" id="CLU_113441_4_0_7"/>
<dbReference type="Proteomes" id="UP000008080">
    <property type="component" value="Chromosome"/>
</dbReference>
<dbReference type="GO" id="GO:0005737">
    <property type="term" value="C:cytoplasm"/>
    <property type="evidence" value="ECO:0007669"/>
    <property type="project" value="UniProtKB-ARBA"/>
</dbReference>
<dbReference type="GO" id="GO:1990904">
    <property type="term" value="C:ribonucleoprotein complex"/>
    <property type="evidence" value="ECO:0007669"/>
    <property type="project" value="UniProtKB-KW"/>
</dbReference>
<dbReference type="GO" id="GO:0005840">
    <property type="term" value="C:ribosome"/>
    <property type="evidence" value="ECO:0007669"/>
    <property type="project" value="UniProtKB-KW"/>
</dbReference>
<dbReference type="GO" id="GO:0070181">
    <property type="term" value="F:small ribosomal subunit rRNA binding"/>
    <property type="evidence" value="ECO:0007669"/>
    <property type="project" value="TreeGrafter"/>
</dbReference>
<dbReference type="GO" id="GO:0003735">
    <property type="term" value="F:structural constituent of ribosome"/>
    <property type="evidence" value="ECO:0007669"/>
    <property type="project" value="InterPro"/>
</dbReference>
<dbReference type="GO" id="GO:0006412">
    <property type="term" value="P:translation"/>
    <property type="evidence" value="ECO:0007669"/>
    <property type="project" value="UniProtKB-UniRule"/>
</dbReference>
<dbReference type="CDD" id="cd00473">
    <property type="entry name" value="bS6"/>
    <property type="match status" value="1"/>
</dbReference>
<dbReference type="Gene3D" id="3.30.70.60">
    <property type="match status" value="1"/>
</dbReference>
<dbReference type="HAMAP" id="MF_00360">
    <property type="entry name" value="Ribosomal_bS6"/>
    <property type="match status" value="1"/>
</dbReference>
<dbReference type="InterPro" id="IPR000529">
    <property type="entry name" value="Ribosomal_bS6"/>
</dbReference>
<dbReference type="InterPro" id="IPR035980">
    <property type="entry name" value="Ribosomal_bS6_sf"/>
</dbReference>
<dbReference type="InterPro" id="IPR020814">
    <property type="entry name" value="Ribosomal_S6_plastid/chlpt"/>
</dbReference>
<dbReference type="InterPro" id="IPR014717">
    <property type="entry name" value="Transl_elong_EF1B/ribsomal_bS6"/>
</dbReference>
<dbReference type="NCBIfam" id="TIGR00166">
    <property type="entry name" value="S6"/>
    <property type="match status" value="1"/>
</dbReference>
<dbReference type="PANTHER" id="PTHR21011">
    <property type="entry name" value="MITOCHONDRIAL 28S RIBOSOMAL PROTEIN S6"/>
    <property type="match status" value="1"/>
</dbReference>
<dbReference type="PANTHER" id="PTHR21011:SF1">
    <property type="entry name" value="SMALL RIBOSOMAL SUBUNIT PROTEIN BS6M"/>
    <property type="match status" value="1"/>
</dbReference>
<dbReference type="Pfam" id="PF01250">
    <property type="entry name" value="Ribosomal_S6"/>
    <property type="match status" value="1"/>
</dbReference>
<dbReference type="SUPFAM" id="SSF54995">
    <property type="entry name" value="Ribosomal protein S6"/>
    <property type="match status" value="1"/>
</dbReference>
<accession>Q6MRP3</accession>
<gene>
    <name evidence="1" type="primary">rpsF</name>
    <name type="ordered locus">Bd0032</name>
</gene>
<comment type="function">
    <text evidence="1">Binds together with bS18 to 16S ribosomal RNA.</text>
</comment>
<comment type="similarity">
    <text evidence="1">Belongs to the bacterial ribosomal protein bS6 family.</text>
</comment>
<sequence length="152" mass="17293">METTTTKKPYEVVVLMHPDASLEEQKDLFKKNKATIESYKGSINSLETWGKRTLATPIGKLKKAIYFHSTFEADTQAIAELERTMRINDKVLRFMHTRLDERTSLGKFMEGFKKGLAESAAREKEREAKAAARKAAFAAAKAERSERYDKGE</sequence>